<comment type="function">
    <text evidence="4 5">Part of the ABC transporter complex SsuABC involved in aliphatic sulfonates import. Responsible for energy coupling to the transport system (Probable).</text>
</comment>
<comment type="catalytic activity">
    <reaction evidence="1 4">
        <text>ATP + H2O + aliphatic sulfonate-[sulfonate-binding protein]Side 1 = ADP + phosphate + aliphatic sulfonateSide 2 + [sulfonate-binding protein]Side 1.</text>
        <dbReference type="EC" id="7.6.2.14"/>
    </reaction>
</comment>
<comment type="subunit">
    <text evidence="1">The complex is composed of two ATP-binding proteins (SsuB), two transmembrane proteins (SsuC) and a solute-binding protein (SsuA).</text>
</comment>
<comment type="subcellular location">
    <subcellularLocation>
        <location evidence="1">Cell inner membrane</location>
        <topology evidence="1">Peripheral membrane protein</topology>
    </subcellularLocation>
</comment>
<comment type="induction">
    <text evidence="2">Repressed by sulfate and cystine. Transcriptionally regulated by cbl.</text>
</comment>
<comment type="similarity">
    <text evidence="1">Belongs to the ABC transporter superfamily. Aliphatic sulfonates importer (TC 3.A.1.17.2) family.</text>
</comment>
<reference key="1">
    <citation type="journal article" date="1999" name="J. Biol. Chem.">
        <title>The Escherichia coli ssuEADCB gene cluster is required for the utilization of sulfur from aliphatic sulfonates and is regulated by the transcriptional activator Cbl.</title>
        <authorList>
            <person name="Van der Ploeg J.R."/>
            <person name="Iwanicka-Nowicka R."/>
            <person name="Bykowski T."/>
            <person name="Hryniewicz M.M."/>
            <person name="Leisinger T."/>
        </authorList>
    </citation>
    <scope>NUCLEOTIDE SEQUENCE [GENOMIC DNA]</scope>
    <scope>FUNCTION IN ALIPHATIC SULFONATES TRANSPORT</scope>
    <scope>INDUCTION</scope>
    <source>
        <strain>K12</strain>
    </source>
</reference>
<reference key="2">
    <citation type="journal article" date="1996" name="DNA Res.">
        <title>A 718-kb DNA sequence of the Escherichia coli K-12 genome corresponding to the 12.7-28.0 min region on the linkage map.</title>
        <authorList>
            <person name="Oshima T."/>
            <person name="Aiba H."/>
            <person name="Baba T."/>
            <person name="Fujita K."/>
            <person name="Hayashi K."/>
            <person name="Honjo A."/>
            <person name="Ikemoto K."/>
            <person name="Inada T."/>
            <person name="Itoh T."/>
            <person name="Kajihara M."/>
            <person name="Kanai K."/>
            <person name="Kashimoto K."/>
            <person name="Kimura S."/>
            <person name="Kitagawa M."/>
            <person name="Makino K."/>
            <person name="Masuda S."/>
            <person name="Miki T."/>
            <person name="Mizobuchi K."/>
            <person name="Mori H."/>
            <person name="Motomura K."/>
            <person name="Nakamura Y."/>
            <person name="Nashimoto H."/>
            <person name="Nishio Y."/>
            <person name="Saito N."/>
            <person name="Sampei G."/>
            <person name="Seki Y."/>
            <person name="Tagami H."/>
            <person name="Takemoto K."/>
            <person name="Wada C."/>
            <person name="Yamamoto Y."/>
            <person name="Yano M."/>
            <person name="Horiuchi T."/>
        </authorList>
    </citation>
    <scope>NUCLEOTIDE SEQUENCE [LARGE SCALE GENOMIC DNA]</scope>
    <source>
        <strain>K12 / W3110 / ATCC 27325 / DSM 5911</strain>
    </source>
</reference>
<reference key="3">
    <citation type="journal article" date="1997" name="Science">
        <title>The complete genome sequence of Escherichia coli K-12.</title>
        <authorList>
            <person name="Blattner F.R."/>
            <person name="Plunkett G. III"/>
            <person name="Bloch C.A."/>
            <person name="Perna N.T."/>
            <person name="Burland V."/>
            <person name="Riley M."/>
            <person name="Collado-Vides J."/>
            <person name="Glasner J.D."/>
            <person name="Rode C.K."/>
            <person name="Mayhew G.F."/>
            <person name="Gregor J."/>
            <person name="Davis N.W."/>
            <person name="Kirkpatrick H.A."/>
            <person name="Goeden M.A."/>
            <person name="Rose D.J."/>
            <person name="Mau B."/>
            <person name="Shao Y."/>
        </authorList>
    </citation>
    <scope>NUCLEOTIDE SEQUENCE [LARGE SCALE GENOMIC DNA]</scope>
    <source>
        <strain>K12 / MG1655 / ATCC 47076</strain>
    </source>
</reference>
<reference key="4">
    <citation type="journal article" date="2006" name="Mol. Syst. Biol.">
        <title>Highly accurate genome sequences of Escherichia coli K-12 strains MG1655 and W3110.</title>
        <authorList>
            <person name="Hayashi K."/>
            <person name="Morooka N."/>
            <person name="Yamamoto Y."/>
            <person name="Fujita K."/>
            <person name="Isono K."/>
            <person name="Choi S."/>
            <person name="Ohtsubo E."/>
            <person name="Baba T."/>
            <person name="Wanner B.L."/>
            <person name="Mori H."/>
            <person name="Horiuchi T."/>
        </authorList>
    </citation>
    <scope>NUCLEOTIDE SEQUENCE [LARGE SCALE GENOMIC DNA]</scope>
    <source>
        <strain>K12 / W3110 / ATCC 27325 / DSM 5911</strain>
    </source>
</reference>
<reference key="5">
    <citation type="journal article" date="1986" name="Gene">
        <title>The nucleotide sequence of the pepN gene and its over-expression in Escherichia coli.</title>
        <authorList>
            <person name="McCaman M.T."/>
            <person name="Gabe J.D."/>
        </authorList>
    </citation>
    <scope>NUCLEOTIDE SEQUENCE [GENOMIC DNA] OF 161-255</scope>
    <source>
        <strain>K12</strain>
    </source>
</reference>
<reference key="6">
    <citation type="journal article" date="1994" name="Nucleic Acids Res.">
        <title>Intrinsic and extrinsic approaches for detecting genes in a bacterial genome.</title>
        <authorList>
            <person name="Borodovsky M."/>
            <person name="Rudd K.E."/>
            <person name="Koonin E.V."/>
        </authorList>
    </citation>
    <scope>IDENTIFICATION</scope>
</reference>
<reference key="7">
    <citation type="journal article" date="2000" name="J. Bacteriol.">
        <title>Deletion analysis of the Escherichia coli taurine and alkanesulfonate transport systems.</title>
        <authorList>
            <person name="Eichhorn E."/>
            <person name="van der Ploeg J.R."/>
            <person name="Leisinger T."/>
        </authorList>
    </citation>
    <scope>FUNCTION IN ALIPHATIC SULFONATES TRANSPORT</scope>
    <source>
        <strain>K12</strain>
    </source>
</reference>
<reference key="8">
    <citation type="journal article" date="2001" name="Arch. Microbiol.">
        <title>Sulfonate-sulfur metabolism and its regulation in Escherichia coli.</title>
        <authorList>
            <person name="van der Ploeg J.R."/>
            <person name="Eichhorn E."/>
            <person name="Leisinger T."/>
        </authorList>
    </citation>
    <scope>REVIEW</scope>
</reference>
<evidence type="ECO:0000255" key="1">
    <source>
        <dbReference type="HAMAP-Rule" id="MF_01724"/>
    </source>
</evidence>
<evidence type="ECO:0000269" key="2">
    <source>
    </source>
</evidence>
<evidence type="ECO:0000305" key="3"/>
<evidence type="ECO:0000305" key="4">
    <source>
    </source>
</evidence>
<evidence type="ECO:0000305" key="5">
    <source>
    </source>
</evidence>
<gene>
    <name evidence="1" type="primary">ssuB</name>
    <name type="synonym">ycbE</name>
    <name type="ordered locus">b0933</name>
    <name type="ordered locus">JW0916</name>
</gene>
<organism>
    <name type="scientific">Escherichia coli (strain K12)</name>
    <dbReference type="NCBI Taxonomy" id="83333"/>
    <lineage>
        <taxon>Bacteria</taxon>
        <taxon>Pseudomonadati</taxon>
        <taxon>Pseudomonadota</taxon>
        <taxon>Gammaproteobacteria</taxon>
        <taxon>Enterobacterales</taxon>
        <taxon>Enterobacteriaceae</taxon>
        <taxon>Escherichia</taxon>
    </lineage>
</organism>
<feature type="chain" id="PRO_0000092976" description="Aliphatic sulfonates import ATP-binding protein SsuB">
    <location>
        <begin position="1"/>
        <end position="255"/>
    </location>
</feature>
<feature type="domain" description="ABC transporter" evidence="1">
    <location>
        <begin position="12"/>
        <end position="233"/>
    </location>
</feature>
<feature type="binding site" evidence="1">
    <location>
        <begin position="44"/>
        <end position="51"/>
    </location>
    <ligand>
        <name>ATP</name>
        <dbReference type="ChEBI" id="CHEBI:30616"/>
    </ligand>
</feature>
<feature type="sequence conflict" description="In Ref. 5; M15273." evidence="3" ref="5">
    <original>GALDA</original>
    <variation>RGAGR</variation>
    <location>
        <begin position="161"/>
        <end position="165"/>
    </location>
</feature>
<feature type="sequence conflict" description="In Ref. 5; M15273." evidence="3" ref="5">
    <original>EL</original>
    <variation>DV</variation>
    <location>
        <begin position="232"/>
        <end position="233"/>
    </location>
</feature>
<feature type="sequence conflict" description="In Ref. 5; M15273." evidence="3" ref="5">
    <original>EV</original>
    <variation>RS</variation>
    <location>
        <begin position="236"/>
        <end position="237"/>
    </location>
</feature>
<dbReference type="EC" id="7.6.2.14" evidence="1 4"/>
<dbReference type="EMBL" id="AJ237695">
    <property type="protein sequence ID" value="CAB40393.1"/>
    <property type="molecule type" value="Genomic_DNA"/>
</dbReference>
<dbReference type="EMBL" id="U00096">
    <property type="protein sequence ID" value="AAC74019.1"/>
    <property type="molecule type" value="Genomic_DNA"/>
</dbReference>
<dbReference type="EMBL" id="AP009048">
    <property type="protein sequence ID" value="BAA35685.1"/>
    <property type="molecule type" value="Genomic_DNA"/>
</dbReference>
<dbReference type="EMBL" id="M15273">
    <property type="status" value="NOT_ANNOTATED_CDS"/>
    <property type="molecule type" value="Genomic_DNA"/>
</dbReference>
<dbReference type="PIR" id="D64833">
    <property type="entry name" value="D64833"/>
</dbReference>
<dbReference type="RefSeq" id="NP_415453.1">
    <property type="nucleotide sequence ID" value="NC_000913.3"/>
</dbReference>
<dbReference type="RefSeq" id="WP_001090506.1">
    <property type="nucleotide sequence ID" value="NZ_SSZK01000002.1"/>
</dbReference>
<dbReference type="SMR" id="P0AAI1"/>
<dbReference type="BioGRID" id="4261879">
    <property type="interactions" value="20"/>
</dbReference>
<dbReference type="BioGRID" id="851552">
    <property type="interactions" value="1"/>
</dbReference>
<dbReference type="ComplexPortal" id="CPX-4313">
    <property type="entry name" value="Aliphatic sulfonate ABC transporter complex"/>
</dbReference>
<dbReference type="FunCoup" id="P0AAI1">
    <property type="interactions" value="300"/>
</dbReference>
<dbReference type="IntAct" id="P0AAI1">
    <property type="interactions" value="7"/>
</dbReference>
<dbReference type="STRING" id="511145.b0933"/>
<dbReference type="PaxDb" id="511145-b0933"/>
<dbReference type="EnsemblBacteria" id="AAC74019">
    <property type="protein sequence ID" value="AAC74019"/>
    <property type="gene ID" value="b0933"/>
</dbReference>
<dbReference type="GeneID" id="947220"/>
<dbReference type="KEGG" id="ecj:JW0916"/>
<dbReference type="KEGG" id="eco:b0933"/>
<dbReference type="KEGG" id="ecoc:C3026_05730"/>
<dbReference type="PATRIC" id="fig|1411691.4.peg.1341"/>
<dbReference type="EchoBASE" id="EB2261"/>
<dbReference type="eggNOG" id="COG1116">
    <property type="taxonomic scope" value="Bacteria"/>
</dbReference>
<dbReference type="HOGENOM" id="CLU_000604_1_22_6"/>
<dbReference type="InParanoid" id="P0AAI1"/>
<dbReference type="OMA" id="RMKDFDA"/>
<dbReference type="OrthoDB" id="9802264at2"/>
<dbReference type="PhylomeDB" id="P0AAI1"/>
<dbReference type="BioCyc" id="EcoCyc:YCBE-MONOMER"/>
<dbReference type="BioCyc" id="MetaCyc:YCBE-MONOMER"/>
<dbReference type="PRO" id="PR:P0AAI1"/>
<dbReference type="Proteomes" id="UP000000625">
    <property type="component" value="Chromosome"/>
</dbReference>
<dbReference type="GO" id="GO:0055052">
    <property type="term" value="C:ATP-binding cassette (ABC) transporter complex, substrate-binding subunit-containing"/>
    <property type="evidence" value="ECO:0000303"/>
    <property type="project" value="ComplexPortal"/>
</dbReference>
<dbReference type="GO" id="GO:0016020">
    <property type="term" value="C:membrane"/>
    <property type="evidence" value="ECO:0000303"/>
    <property type="project" value="ComplexPortal"/>
</dbReference>
<dbReference type="GO" id="GO:0042959">
    <property type="term" value="F:ABC-type alkanesulfonate transporter transporter activity"/>
    <property type="evidence" value="ECO:0000269"/>
    <property type="project" value="EcoCyc"/>
</dbReference>
<dbReference type="GO" id="GO:0005524">
    <property type="term" value="F:ATP binding"/>
    <property type="evidence" value="ECO:0000255"/>
    <property type="project" value="EcoCyc"/>
</dbReference>
<dbReference type="GO" id="GO:0016887">
    <property type="term" value="F:ATP hydrolysis activity"/>
    <property type="evidence" value="ECO:0007669"/>
    <property type="project" value="InterPro"/>
</dbReference>
<dbReference type="GO" id="GO:0042918">
    <property type="term" value="P:alkanesulfonate transmembrane transport"/>
    <property type="evidence" value="ECO:0000269"/>
    <property type="project" value="EcoCyc"/>
</dbReference>
<dbReference type="GO" id="GO:0010438">
    <property type="term" value="P:cellular response to sulfur starvation"/>
    <property type="evidence" value="ECO:0000303"/>
    <property type="project" value="ComplexPortal"/>
</dbReference>
<dbReference type="GO" id="GO:0006790">
    <property type="term" value="P:sulfur compound metabolic process"/>
    <property type="evidence" value="ECO:0000269"/>
    <property type="project" value="EcoCyc"/>
</dbReference>
<dbReference type="CDD" id="cd03293">
    <property type="entry name" value="ABC_NrtD_SsuB_transporters"/>
    <property type="match status" value="1"/>
</dbReference>
<dbReference type="FunFam" id="3.40.50.300:FF:000653">
    <property type="entry name" value="Aliphatic sulfonates import ATP-binding protein SsuB"/>
    <property type="match status" value="1"/>
</dbReference>
<dbReference type="Gene3D" id="3.40.50.300">
    <property type="entry name" value="P-loop containing nucleotide triphosphate hydrolases"/>
    <property type="match status" value="1"/>
</dbReference>
<dbReference type="InterPro" id="IPR003593">
    <property type="entry name" value="AAA+_ATPase"/>
</dbReference>
<dbReference type="InterPro" id="IPR003439">
    <property type="entry name" value="ABC_transporter-like_ATP-bd"/>
</dbReference>
<dbReference type="InterPro" id="IPR017871">
    <property type="entry name" value="ABC_transporter-like_CS"/>
</dbReference>
<dbReference type="InterPro" id="IPR050166">
    <property type="entry name" value="ABC_transporter_ATP-bind"/>
</dbReference>
<dbReference type="InterPro" id="IPR027417">
    <property type="entry name" value="P-loop_NTPase"/>
</dbReference>
<dbReference type="NCBIfam" id="NF008420">
    <property type="entry name" value="PRK11247.1"/>
    <property type="match status" value="1"/>
</dbReference>
<dbReference type="PANTHER" id="PTHR42788:SF17">
    <property type="entry name" value="ALIPHATIC SULFONATES IMPORT ATP-BINDING PROTEIN SSUB"/>
    <property type="match status" value="1"/>
</dbReference>
<dbReference type="PANTHER" id="PTHR42788">
    <property type="entry name" value="TAURINE IMPORT ATP-BINDING PROTEIN-RELATED"/>
    <property type="match status" value="1"/>
</dbReference>
<dbReference type="Pfam" id="PF00005">
    <property type="entry name" value="ABC_tran"/>
    <property type="match status" value="1"/>
</dbReference>
<dbReference type="SMART" id="SM00382">
    <property type="entry name" value="AAA"/>
    <property type="match status" value="1"/>
</dbReference>
<dbReference type="SUPFAM" id="SSF52540">
    <property type="entry name" value="P-loop containing nucleoside triphosphate hydrolases"/>
    <property type="match status" value="1"/>
</dbReference>
<dbReference type="PROSITE" id="PS00211">
    <property type="entry name" value="ABC_TRANSPORTER_1"/>
    <property type="match status" value="1"/>
</dbReference>
<dbReference type="PROSITE" id="PS50893">
    <property type="entry name" value="ABC_TRANSPORTER_2"/>
    <property type="match status" value="1"/>
</dbReference>
<dbReference type="PROSITE" id="PS51291">
    <property type="entry name" value="SSUB"/>
    <property type="match status" value="1"/>
</dbReference>
<sequence length="255" mass="27738">MNTARLNQGTPLLLNAVSKHYAENIVLNQLDLHIPAGQFVAVVGRSGGGKSTLLRLLAGLETPTAGDVLAGTTPLAEIQEDTRMMFQDARLLPWKSVIDNVGLGLKGQWRDAARRALAAVGLENRAGEWPAALSGGQKQRVALARALIHRPGLLLLDEPLGALDALTRLEMQDLIVSLWQEHGFTVLLVTHDVSEAVAMADRVLLIEEGKIGLDLTVDIPRPRRLGSVRLAELEAEVLQRVMQRGESETRLRKQG</sequence>
<proteinExistence type="evidence at protein level"/>
<keyword id="KW-0067">ATP-binding</keyword>
<keyword id="KW-0997">Cell inner membrane</keyword>
<keyword id="KW-1003">Cell membrane</keyword>
<keyword id="KW-0472">Membrane</keyword>
<keyword id="KW-0547">Nucleotide-binding</keyword>
<keyword id="KW-1185">Reference proteome</keyword>
<keyword id="KW-1278">Translocase</keyword>
<keyword id="KW-0813">Transport</keyword>
<accession>P0AAI1</accession>
<accession>P38053</accession>
<accession>P75850</accession>
<protein>
    <recommendedName>
        <fullName evidence="1">Aliphatic sulfonates import ATP-binding protein SsuB</fullName>
        <ecNumber evidence="1 4">7.6.2.14</ecNumber>
    </recommendedName>
</protein>
<name>SSUB_ECOLI</name>